<proteinExistence type="inferred from homology"/>
<keyword id="KW-0131">Cell cycle</keyword>
<keyword id="KW-0132">Cell division</keyword>
<keyword id="KW-0997">Cell inner membrane</keyword>
<keyword id="KW-1003">Cell membrane</keyword>
<keyword id="KW-0175">Coiled coil</keyword>
<keyword id="KW-0472">Membrane</keyword>
<keyword id="KW-0812">Transmembrane</keyword>
<keyword id="KW-1133">Transmembrane helix</keyword>
<protein>
    <recommendedName>
        <fullName evidence="1">Cell division protein FtsB</fullName>
    </recommendedName>
</protein>
<organism>
    <name type="scientific">Xanthomonas euvesicatoria pv. vesicatoria (strain 85-10)</name>
    <name type="common">Xanthomonas campestris pv. vesicatoria</name>
    <dbReference type="NCBI Taxonomy" id="316273"/>
    <lineage>
        <taxon>Bacteria</taxon>
        <taxon>Pseudomonadati</taxon>
        <taxon>Pseudomonadota</taxon>
        <taxon>Gammaproteobacteria</taxon>
        <taxon>Lysobacterales</taxon>
        <taxon>Lysobacteraceae</taxon>
        <taxon>Xanthomonas</taxon>
    </lineage>
</organism>
<name>FTSB_XANE5</name>
<evidence type="ECO:0000255" key="1">
    <source>
        <dbReference type="HAMAP-Rule" id="MF_00599"/>
    </source>
</evidence>
<evidence type="ECO:0000256" key="2">
    <source>
        <dbReference type="SAM" id="MobiDB-lite"/>
    </source>
</evidence>
<comment type="function">
    <text evidence="1">Essential cell division protein. May link together the upstream cell division proteins, which are predominantly cytoplasmic, with the downstream cell division proteins, which are predominantly periplasmic.</text>
</comment>
<comment type="subunit">
    <text evidence="1">Part of a complex composed of FtsB, FtsL and FtsQ.</text>
</comment>
<comment type="subcellular location">
    <subcellularLocation>
        <location evidence="1">Cell inner membrane</location>
        <topology evidence="1">Single-pass type II membrane protein</topology>
    </subcellularLocation>
    <text evidence="1">Localizes to the division septum.</text>
</comment>
<comment type="similarity">
    <text evidence="1">Belongs to the FtsB family.</text>
</comment>
<reference key="1">
    <citation type="journal article" date="2005" name="J. Bacteriol.">
        <title>Insights into genome plasticity and pathogenicity of the plant pathogenic Bacterium Xanthomonas campestris pv. vesicatoria revealed by the complete genome sequence.</title>
        <authorList>
            <person name="Thieme F."/>
            <person name="Koebnik R."/>
            <person name="Bekel T."/>
            <person name="Berger C."/>
            <person name="Boch J."/>
            <person name="Buettner D."/>
            <person name="Caldana C."/>
            <person name="Gaigalat L."/>
            <person name="Goesmann A."/>
            <person name="Kay S."/>
            <person name="Kirchner O."/>
            <person name="Lanz C."/>
            <person name="Linke B."/>
            <person name="McHardy A.C."/>
            <person name="Meyer F."/>
            <person name="Mittenhuber G."/>
            <person name="Nies D.H."/>
            <person name="Niesbach-Kloesgen U."/>
            <person name="Patschkowski T."/>
            <person name="Rueckert C."/>
            <person name="Rupp O."/>
            <person name="Schneiker S."/>
            <person name="Schuster S.C."/>
            <person name="Vorhoelter F.J."/>
            <person name="Weber E."/>
            <person name="Puehler A."/>
            <person name="Bonas U."/>
            <person name="Bartels D."/>
            <person name="Kaiser O."/>
        </authorList>
    </citation>
    <scope>NUCLEOTIDE SEQUENCE [LARGE SCALE GENOMIC DNA]</scope>
    <source>
        <strain>85-10</strain>
    </source>
</reference>
<sequence length="121" mass="13551">MRNWRWLLLVLAVLLAWLQYRFWFGPGNSGEVMMLEAQVAHQTQDNEGLRQRNQALAAEVKDLKDGEAAIEERARSELGMIKPGETFYRVVEDAPLPAPASPEAPAPPQQAPEPIDPVDHP</sequence>
<gene>
    <name evidence="1" type="primary">ftsB</name>
    <name type="ordered locus">XCV1753</name>
</gene>
<accession>Q3BUS9</accession>
<feature type="chain" id="PRO_1000025735" description="Cell division protein FtsB">
    <location>
        <begin position="1"/>
        <end position="121"/>
    </location>
</feature>
<feature type="topological domain" description="Cytoplasmic" evidence="1">
    <location>
        <begin position="1"/>
        <end position="6"/>
    </location>
</feature>
<feature type="transmembrane region" description="Helical" evidence="1">
    <location>
        <begin position="7"/>
        <end position="24"/>
    </location>
</feature>
<feature type="topological domain" description="Periplasmic" evidence="1">
    <location>
        <begin position="25"/>
        <end position="121"/>
    </location>
</feature>
<feature type="region of interest" description="Disordered" evidence="2">
    <location>
        <begin position="92"/>
        <end position="121"/>
    </location>
</feature>
<feature type="coiled-coil region" evidence="1">
    <location>
        <begin position="31"/>
        <end position="66"/>
    </location>
</feature>
<feature type="compositionally biased region" description="Pro residues" evidence="2">
    <location>
        <begin position="96"/>
        <end position="115"/>
    </location>
</feature>
<dbReference type="EMBL" id="AM039952">
    <property type="protein sequence ID" value="CAJ23430.1"/>
    <property type="molecule type" value="Genomic_DNA"/>
</dbReference>
<dbReference type="RefSeq" id="WP_008577317.1">
    <property type="nucleotide sequence ID" value="NZ_CP017190.1"/>
</dbReference>
<dbReference type="SMR" id="Q3BUS9"/>
<dbReference type="STRING" id="456327.BJD11_13780"/>
<dbReference type="GeneID" id="97510095"/>
<dbReference type="KEGG" id="xcv:XCV1753"/>
<dbReference type="eggNOG" id="COG2919">
    <property type="taxonomic scope" value="Bacteria"/>
</dbReference>
<dbReference type="HOGENOM" id="CLU_134863_5_0_6"/>
<dbReference type="Proteomes" id="UP000007069">
    <property type="component" value="Chromosome"/>
</dbReference>
<dbReference type="GO" id="GO:0032153">
    <property type="term" value="C:cell division site"/>
    <property type="evidence" value="ECO:0007669"/>
    <property type="project" value="UniProtKB-UniRule"/>
</dbReference>
<dbReference type="GO" id="GO:0030428">
    <property type="term" value="C:cell septum"/>
    <property type="evidence" value="ECO:0007669"/>
    <property type="project" value="TreeGrafter"/>
</dbReference>
<dbReference type="GO" id="GO:0005886">
    <property type="term" value="C:plasma membrane"/>
    <property type="evidence" value="ECO:0007669"/>
    <property type="project" value="UniProtKB-SubCell"/>
</dbReference>
<dbReference type="GO" id="GO:0043093">
    <property type="term" value="P:FtsZ-dependent cytokinesis"/>
    <property type="evidence" value="ECO:0007669"/>
    <property type="project" value="UniProtKB-UniRule"/>
</dbReference>
<dbReference type="HAMAP" id="MF_00599">
    <property type="entry name" value="FtsB"/>
    <property type="match status" value="1"/>
</dbReference>
<dbReference type="InterPro" id="IPR023081">
    <property type="entry name" value="Cell_div_FtsB"/>
</dbReference>
<dbReference type="InterPro" id="IPR007060">
    <property type="entry name" value="FtsL/DivIC"/>
</dbReference>
<dbReference type="NCBIfam" id="NF002058">
    <property type="entry name" value="PRK00888.1"/>
    <property type="match status" value="1"/>
</dbReference>
<dbReference type="PANTHER" id="PTHR37485">
    <property type="entry name" value="CELL DIVISION PROTEIN FTSB"/>
    <property type="match status" value="1"/>
</dbReference>
<dbReference type="PANTHER" id="PTHR37485:SF1">
    <property type="entry name" value="CELL DIVISION PROTEIN FTSB"/>
    <property type="match status" value="1"/>
</dbReference>
<dbReference type="Pfam" id="PF04977">
    <property type="entry name" value="DivIC"/>
    <property type="match status" value="1"/>
</dbReference>